<gene>
    <name evidence="1" type="primary">rplW</name>
    <name evidence="1" type="synonym">rpl23</name>
    <name type="ordered locus">SynRCC307_2118</name>
</gene>
<sequence>MAERFSSRLADVIRRPLITEKATRALEMNQYTFEVDPRAAKPDIKAAVEHLFDVKVIGVSTMNPPRRTRRVGRFAGRRSQVKKAVVRLAEGNSIQLFPES</sequence>
<name>RL23_SYNR3</name>
<feature type="chain" id="PRO_1000068179" description="Large ribosomal subunit protein uL23">
    <location>
        <begin position="1"/>
        <end position="100"/>
    </location>
</feature>
<dbReference type="EMBL" id="CT978603">
    <property type="protein sequence ID" value="CAK29021.1"/>
    <property type="molecule type" value="Genomic_DNA"/>
</dbReference>
<dbReference type="SMR" id="A5GVW2"/>
<dbReference type="STRING" id="316278.SynRCC307_2118"/>
<dbReference type="KEGG" id="syr:SynRCC307_2118"/>
<dbReference type="eggNOG" id="COG0089">
    <property type="taxonomic scope" value="Bacteria"/>
</dbReference>
<dbReference type="HOGENOM" id="CLU_037562_3_2_3"/>
<dbReference type="OrthoDB" id="9793353at2"/>
<dbReference type="Proteomes" id="UP000001115">
    <property type="component" value="Chromosome"/>
</dbReference>
<dbReference type="GO" id="GO:1990904">
    <property type="term" value="C:ribonucleoprotein complex"/>
    <property type="evidence" value="ECO:0007669"/>
    <property type="project" value="UniProtKB-KW"/>
</dbReference>
<dbReference type="GO" id="GO:0005840">
    <property type="term" value="C:ribosome"/>
    <property type="evidence" value="ECO:0007669"/>
    <property type="project" value="UniProtKB-KW"/>
</dbReference>
<dbReference type="GO" id="GO:0019843">
    <property type="term" value="F:rRNA binding"/>
    <property type="evidence" value="ECO:0007669"/>
    <property type="project" value="UniProtKB-UniRule"/>
</dbReference>
<dbReference type="GO" id="GO:0003735">
    <property type="term" value="F:structural constituent of ribosome"/>
    <property type="evidence" value="ECO:0007669"/>
    <property type="project" value="InterPro"/>
</dbReference>
<dbReference type="GO" id="GO:0006412">
    <property type="term" value="P:translation"/>
    <property type="evidence" value="ECO:0007669"/>
    <property type="project" value="UniProtKB-UniRule"/>
</dbReference>
<dbReference type="FunFam" id="3.30.70.330:FF:000001">
    <property type="entry name" value="50S ribosomal protein L23"/>
    <property type="match status" value="1"/>
</dbReference>
<dbReference type="Gene3D" id="3.30.70.330">
    <property type="match status" value="1"/>
</dbReference>
<dbReference type="HAMAP" id="MF_01369_B">
    <property type="entry name" value="Ribosomal_uL23_B"/>
    <property type="match status" value="1"/>
</dbReference>
<dbReference type="InterPro" id="IPR012677">
    <property type="entry name" value="Nucleotide-bd_a/b_plait_sf"/>
</dbReference>
<dbReference type="InterPro" id="IPR013025">
    <property type="entry name" value="Ribosomal_uL23-like"/>
</dbReference>
<dbReference type="InterPro" id="IPR012678">
    <property type="entry name" value="Ribosomal_uL23/eL15/eS24_sf"/>
</dbReference>
<dbReference type="InterPro" id="IPR001014">
    <property type="entry name" value="Ribosomal_uL23_CS"/>
</dbReference>
<dbReference type="NCBIfam" id="NF004359">
    <property type="entry name" value="PRK05738.1-3"/>
    <property type="match status" value="1"/>
</dbReference>
<dbReference type="NCBIfam" id="NF004363">
    <property type="entry name" value="PRK05738.2-4"/>
    <property type="match status" value="1"/>
</dbReference>
<dbReference type="NCBIfam" id="NF004365">
    <property type="entry name" value="PRK05738.3-1"/>
    <property type="match status" value="1"/>
</dbReference>
<dbReference type="NCBIfam" id="NF004366">
    <property type="entry name" value="PRK05738.3-2"/>
    <property type="match status" value="1"/>
</dbReference>
<dbReference type="NCBIfam" id="NF004368">
    <property type="entry name" value="PRK05738.3-4"/>
    <property type="match status" value="1"/>
</dbReference>
<dbReference type="PANTHER" id="PTHR11620">
    <property type="entry name" value="60S RIBOSOMAL PROTEIN L23A"/>
    <property type="match status" value="1"/>
</dbReference>
<dbReference type="Pfam" id="PF00276">
    <property type="entry name" value="Ribosomal_L23"/>
    <property type="match status" value="1"/>
</dbReference>
<dbReference type="SUPFAM" id="SSF54189">
    <property type="entry name" value="Ribosomal proteins S24e, L23 and L15e"/>
    <property type="match status" value="1"/>
</dbReference>
<dbReference type="PROSITE" id="PS00050">
    <property type="entry name" value="RIBOSOMAL_L23"/>
    <property type="match status" value="1"/>
</dbReference>
<organism>
    <name type="scientific">Synechococcus sp. (strain RCC307)</name>
    <dbReference type="NCBI Taxonomy" id="316278"/>
    <lineage>
        <taxon>Bacteria</taxon>
        <taxon>Bacillati</taxon>
        <taxon>Cyanobacteriota</taxon>
        <taxon>Cyanophyceae</taxon>
        <taxon>Synechococcales</taxon>
        <taxon>Synechococcaceae</taxon>
        <taxon>Synechococcus</taxon>
    </lineage>
</organism>
<protein>
    <recommendedName>
        <fullName evidence="1">Large ribosomal subunit protein uL23</fullName>
    </recommendedName>
    <alternativeName>
        <fullName evidence="2">50S ribosomal protein L23</fullName>
    </alternativeName>
</protein>
<proteinExistence type="inferred from homology"/>
<reference key="1">
    <citation type="submission" date="2006-05" db="EMBL/GenBank/DDBJ databases">
        <authorList>
            <consortium name="Genoscope"/>
        </authorList>
    </citation>
    <scope>NUCLEOTIDE SEQUENCE [LARGE SCALE GENOMIC DNA]</scope>
    <source>
        <strain>RCC307</strain>
    </source>
</reference>
<comment type="function">
    <text evidence="1">One of the early assembly proteins it binds 23S rRNA. One of the proteins that surrounds the polypeptide exit tunnel on the outside of the ribosome. Forms the main docking site for trigger factor binding to the ribosome.</text>
</comment>
<comment type="subunit">
    <text evidence="1">Part of the 50S ribosomal subunit. Contacts protein L29, and trigger factor when it is bound to the ribosome.</text>
</comment>
<comment type="similarity">
    <text evidence="1">Belongs to the universal ribosomal protein uL23 family.</text>
</comment>
<keyword id="KW-1185">Reference proteome</keyword>
<keyword id="KW-0687">Ribonucleoprotein</keyword>
<keyword id="KW-0689">Ribosomal protein</keyword>
<keyword id="KW-0694">RNA-binding</keyword>
<keyword id="KW-0699">rRNA-binding</keyword>
<evidence type="ECO:0000255" key="1">
    <source>
        <dbReference type="HAMAP-Rule" id="MF_01369"/>
    </source>
</evidence>
<evidence type="ECO:0000305" key="2"/>
<accession>A5GVW2</accession>